<accession>O17953</accession>
<accession>D3YT81</accession>
<comment type="catalytic activity">
    <reaction>
        <text>N(6)-[(R)-dihydrolipoyl]-L-lysyl-[protein] + NAD(+) = N(6)-[(R)-lipoyl]-L-lysyl-[protein] + NADH + H(+)</text>
        <dbReference type="Rhea" id="RHEA:15045"/>
        <dbReference type="Rhea" id="RHEA-COMP:10474"/>
        <dbReference type="Rhea" id="RHEA-COMP:10475"/>
        <dbReference type="ChEBI" id="CHEBI:15378"/>
        <dbReference type="ChEBI" id="CHEBI:57540"/>
        <dbReference type="ChEBI" id="CHEBI:57945"/>
        <dbReference type="ChEBI" id="CHEBI:83099"/>
        <dbReference type="ChEBI" id="CHEBI:83100"/>
        <dbReference type="EC" id="1.8.1.4"/>
    </reaction>
</comment>
<comment type="cofactor">
    <cofactor evidence="1">
        <name>FAD</name>
        <dbReference type="ChEBI" id="CHEBI:57692"/>
    </cofactor>
    <text evidence="1">Binds 1 FAD per subunit.</text>
</comment>
<comment type="subcellular location">
    <subcellularLocation>
        <location evidence="1">Mitochondrion matrix</location>
    </subcellularLocation>
</comment>
<comment type="alternative products">
    <event type="alternative splicing"/>
    <isoform>
        <id>O17953-1</id>
        <name>a</name>
        <sequence type="displayed"/>
    </isoform>
    <isoform>
        <id>O17953-2</id>
        <name>b</name>
        <sequence type="described" ref="VSP_045381"/>
    </isoform>
</comment>
<comment type="miscellaneous">
    <text evidence="1">The active site is a redox-active disulfide bond.</text>
</comment>
<comment type="similarity">
    <text evidence="3">Belongs to the class-I pyridine nucleotide-disulfide oxidoreductase family.</text>
</comment>
<evidence type="ECO:0000250" key="1"/>
<evidence type="ECO:0000255" key="2"/>
<evidence type="ECO:0000305" key="3"/>
<protein>
    <recommendedName>
        <fullName>Dihydrolipoyl dehydrogenase, mitochondrial</fullName>
        <ecNumber>1.8.1.4</ecNumber>
    </recommendedName>
    <alternativeName>
        <fullName>Dihydrolipoamide dehydrogenase</fullName>
    </alternativeName>
</protein>
<sequence length="495" mass="52633">MSLSRTTQLPFAKRQFFQVLARNYSNTQDADLVVIGGGPGGYVAAIKAAQLGMKTVCVEKNATLGGTCLNVGCIPSKALLNNSHYLHMAQHDFAARGIDCTASLNLPKMMEAKSNSVKQLTGGIKQLFKANKVGHVEGFATIVGPNTVQAKKNDGSVETINARNILIASGSEVTPFPGITIDEKQIVSSTGALSLGQVPKKMVVIGAGVIGLELGSVWQRLGAEVTAVEFLGHVGGMGIDGEVSKNFQRSLTKQGFKFLLNTKVMGASQNGSTITVEVEGAKDGKKQTLECDTLLVSVGRRPYTEGLGLSNVQIDLDNRGRVPVNERFQTKVPSIFAIGDVIEGPMLAHKAEDEGILCVEGIAGGPVHIDYNCVPSVVYTHPEVAWVGKAEEQLKQEGVAYKIGKFPFVANSRAKTNNDQEGFVKVLADKQTDRMLGVHIIGPNAGEMIAEATLAMEYGASAEDVARVCHPHPTLSEAFREANLAAYCGKAINNV</sequence>
<keyword id="KW-0025">Alternative splicing</keyword>
<keyword id="KW-1015">Disulfide bond</keyword>
<keyword id="KW-0274">FAD</keyword>
<keyword id="KW-0275">Fatty acid biosynthesis</keyword>
<keyword id="KW-0276">Fatty acid metabolism</keyword>
<keyword id="KW-0285">Flavoprotein</keyword>
<keyword id="KW-0444">Lipid biosynthesis</keyword>
<keyword id="KW-0443">Lipid metabolism</keyword>
<keyword id="KW-0496">Mitochondrion</keyword>
<keyword id="KW-0520">NAD</keyword>
<keyword id="KW-0560">Oxidoreductase</keyword>
<keyword id="KW-0676">Redox-active center</keyword>
<keyword id="KW-1185">Reference proteome</keyword>
<keyword id="KW-0809">Transit peptide</keyword>
<gene>
    <name type="primary">dld-1</name>
    <name type="ORF">LLC1.3</name>
</gene>
<organism>
    <name type="scientific">Caenorhabditis elegans</name>
    <dbReference type="NCBI Taxonomy" id="6239"/>
    <lineage>
        <taxon>Eukaryota</taxon>
        <taxon>Metazoa</taxon>
        <taxon>Ecdysozoa</taxon>
        <taxon>Nematoda</taxon>
        <taxon>Chromadorea</taxon>
        <taxon>Rhabditida</taxon>
        <taxon>Rhabditina</taxon>
        <taxon>Rhabditomorpha</taxon>
        <taxon>Rhabditoidea</taxon>
        <taxon>Rhabditidae</taxon>
        <taxon>Peloderinae</taxon>
        <taxon>Caenorhabditis</taxon>
    </lineage>
</organism>
<name>DLDH_CAEEL</name>
<feature type="transit peptide" description="Mitochondrion" evidence="2">
    <location>
        <begin position="1"/>
        <end status="unknown"/>
    </location>
</feature>
<feature type="chain" id="PRO_0000421278" description="Dihydrolipoyl dehydrogenase, mitochondrial">
    <location>
        <begin status="unknown"/>
        <end position="495"/>
    </location>
</feature>
<feature type="active site" description="Proton acceptor" evidence="1">
    <location>
        <position position="472"/>
    </location>
</feature>
<feature type="binding site" evidence="1">
    <location>
        <begin position="59"/>
        <end position="68"/>
    </location>
    <ligand>
        <name>FAD</name>
        <dbReference type="ChEBI" id="CHEBI:57692"/>
    </ligand>
</feature>
<feature type="binding site" evidence="1">
    <location>
        <position position="77"/>
    </location>
    <ligand>
        <name>FAD</name>
        <dbReference type="ChEBI" id="CHEBI:57692"/>
    </ligand>
</feature>
<feature type="binding site" evidence="1">
    <location>
        <begin position="169"/>
        <end position="171"/>
    </location>
    <ligand>
        <name>FAD</name>
        <dbReference type="ChEBI" id="CHEBI:57692"/>
    </ligand>
</feature>
<feature type="binding site" evidence="1">
    <location>
        <begin position="206"/>
        <end position="213"/>
    </location>
    <ligand>
        <name>NAD(+)</name>
        <dbReference type="ChEBI" id="CHEBI:57540"/>
    </ligand>
</feature>
<feature type="binding site" evidence="1">
    <location>
        <position position="229"/>
    </location>
    <ligand>
        <name>NAD(+)</name>
        <dbReference type="ChEBI" id="CHEBI:57540"/>
    </ligand>
</feature>
<feature type="binding site" evidence="1">
    <location>
        <position position="264"/>
    </location>
    <ligand>
        <name>NAD(+)</name>
        <dbReference type="ChEBI" id="CHEBI:57540"/>
    </ligand>
</feature>
<feature type="binding site" evidence="1">
    <location>
        <position position="299"/>
    </location>
    <ligand>
        <name>NAD(+)</name>
        <dbReference type="ChEBI" id="CHEBI:57540"/>
    </ligand>
</feature>
<feature type="binding site" evidence="1">
    <location>
        <position position="340"/>
    </location>
    <ligand>
        <name>FAD</name>
        <dbReference type="ChEBI" id="CHEBI:57692"/>
    </ligand>
</feature>
<feature type="binding site" evidence="1">
    <location>
        <begin position="346"/>
        <end position="349"/>
    </location>
    <ligand>
        <name>FAD</name>
        <dbReference type="ChEBI" id="CHEBI:57692"/>
    </ligand>
</feature>
<feature type="disulfide bond" description="Redox-active" evidence="1">
    <location>
        <begin position="68"/>
        <end position="73"/>
    </location>
</feature>
<feature type="splice variant" id="VSP_045381" description="In isoform b." evidence="3">
    <location>
        <begin position="1"/>
        <end position="345"/>
    </location>
</feature>
<dbReference type="EC" id="1.8.1.4"/>
<dbReference type="EMBL" id="Z82277">
    <property type="protein sequence ID" value="CAB05249.2"/>
    <property type="molecule type" value="Genomic_DNA"/>
</dbReference>
<dbReference type="EMBL" id="Z82277">
    <property type="protein sequence ID" value="CBK19462.1"/>
    <property type="molecule type" value="Genomic_DNA"/>
</dbReference>
<dbReference type="PIR" id="T23632">
    <property type="entry name" value="T23632"/>
</dbReference>
<dbReference type="RefSeq" id="NP_001255810.1">
    <molecule id="O17953-1"/>
    <property type="nucleotide sequence ID" value="NM_001268881.2"/>
</dbReference>
<dbReference type="RefSeq" id="NP_001255811.1">
    <molecule id="O17953-2"/>
    <property type="nucleotide sequence ID" value="NM_001268882.3"/>
</dbReference>
<dbReference type="SMR" id="O17953"/>
<dbReference type="BioGRID" id="43470">
    <property type="interactions" value="22"/>
</dbReference>
<dbReference type="FunCoup" id="O17953">
    <property type="interactions" value="2015"/>
</dbReference>
<dbReference type="IntAct" id="O17953">
    <property type="interactions" value="2"/>
</dbReference>
<dbReference type="STRING" id="6239.LLC1.3a.1"/>
<dbReference type="PaxDb" id="6239-LLC1.3a"/>
<dbReference type="PeptideAtlas" id="O17953"/>
<dbReference type="EnsemblMetazoa" id="LLC1.3a.1">
    <molecule id="O17953-1"/>
    <property type="protein sequence ID" value="LLC1.3a.1"/>
    <property type="gene ID" value="WBGene00010794"/>
</dbReference>
<dbReference type="EnsemblMetazoa" id="LLC1.3b.1">
    <molecule id="O17953-2"/>
    <property type="protein sequence ID" value="LLC1.3b.1"/>
    <property type="gene ID" value="WBGene00010794"/>
</dbReference>
<dbReference type="GeneID" id="178387"/>
<dbReference type="KEGG" id="cel:CELE_LLC1.3"/>
<dbReference type="UCSC" id="LLC1.3.1">
    <molecule id="O17953-1"/>
    <property type="organism name" value="c. elegans"/>
</dbReference>
<dbReference type="AGR" id="WB:WBGene00010794"/>
<dbReference type="CTD" id="178387"/>
<dbReference type="WormBase" id="LLC1.3a">
    <molecule id="O17953-1"/>
    <property type="protein sequence ID" value="CE31971"/>
    <property type="gene ID" value="WBGene00010794"/>
    <property type="gene designation" value="dld-1"/>
</dbReference>
<dbReference type="WormBase" id="LLC1.3b">
    <molecule id="O17953-2"/>
    <property type="protein sequence ID" value="CE44593"/>
    <property type="gene ID" value="WBGene00010794"/>
    <property type="gene designation" value="dld-1"/>
</dbReference>
<dbReference type="eggNOG" id="KOG1335">
    <property type="taxonomic scope" value="Eukaryota"/>
</dbReference>
<dbReference type="GeneTree" id="ENSGT00550000074844"/>
<dbReference type="HOGENOM" id="CLU_016755_0_3_1"/>
<dbReference type="InParanoid" id="O17953"/>
<dbReference type="OMA" id="CAQLGMK"/>
<dbReference type="OrthoDB" id="361797at2759"/>
<dbReference type="PhylomeDB" id="O17953"/>
<dbReference type="Reactome" id="R-CEL-204174">
    <property type="pathway name" value="Regulation of pyruvate dehydrogenase (PDH) complex"/>
</dbReference>
<dbReference type="Reactome" id="R-CEL-5362517">
    <property type="pathway name" value="Signaling by Retinoic Acid"/>
</dbReference>
<dbReference type="Reactome" id="R-CEL-6783984">
    <property type="pathway name" value="Glycine degradation"/>
</dbReference>
<dbReference type="Reactome" id="R-CEL-9837999">
    <property type="pathway name" value="Mitochondrial protein degradation"/>
</dbReference>
<dbReference type="Reactome" id="R-CEL-9853506">
    <property type="pathway name" value="OGDH complex synthesizes succinyl-CoA from 2-OG"/>
</dbReference>
<dbReference type="Reactome" id="R-CEL-9858328">
    <property type="pathway name" value="OADH complex synthesizes glutaryl-CoA from 2-OA"/>
</dbReference>
<dbReference type="Reactome" id="R-CEL-9859138">
    <property type="pathway name" value="BCKDH synthesizes BCAA-CoA from KIC, KMVA, KIV"/>
</dbReference>
<dbReference type="Reactome" id="R-CEL-9861559">
    <property type="pathway name" value="PDH complex synthesizes acetyl-CoA from PYR"/>
</dbReference>
<dbReference type="PRO" id="PR:O17953"/>
<dbReference type="Proteomes" id="UP000001940">
    <property type="component" value="Chromosome IV"/>
</dbReference>
<dbReference type="Bgee" id="WBGene00010794">
    <property type="expression patterns" value="Expressed in larva and 4 other cell types or tissues"/>
</dbReference>
<dbReference type="GO" id="GO:0005759">
    <property type="term" value="C:mitochondrial matrix"/>
    <property type="evidence" value="ECO:0007669"/>
    <property type="project" value="UniProtKB-SubCell"/>
</dbReference>
<dbReference type="GO" id="GO:0005739">
    <property type="term" value="C:mitochondrion"/>
    <property type="evidence" value="ECO:0000318"/>
    <property type="project" value="GO_Central"/>
</dbReference>
<dbReference type="GO" id="GO:0045252">
    <property type="term" value="C:oxoglutarate dehydrogenase complex"/>
    <property type="evidence" value="ECO:0000318"/>
    <property type="project" value="GO_Central"/>
</dbReference>
<dbReference type="GO" id="GO:0004148">
    <property type="term" value="F:dihydrolipoyl dehydrogenase (NADH) activity"/>
    <property type="evidence" value="ECO:0000318"/>
    <property type="project" value="GO_Central"/>
</dbReference>
<dbReference type="GO" id="GO:0050660">
    <property type="term" value="F:flavin adenine dinucleotide binding"/>
    <property type="evidence" value="ECO:0000318"/>
    <property type="project" value="GO_Central"/>
</dbReference>
<dbReference type="GO" id="GO:0006103">
    <property type="term" value="P:2-oxoglutarate metabolic process"/>
    <property type="evidence" value="ECO:0000318"/>
    <property type="project" value="GO_Central"/>
</dbReference>
<dbReference type="GO" id="GO:0006633">
    <property type="term" value="P:fatty acid biosynthetic process"/>
    <property type="evidence" value="ECO:0007669"/>
    <property type="project" value="UniProtKB-KW"/>
</dbReference>
<dbReference type="GO" id="GO:0006090">
    <property type="term" value="P:pyruvate metabolic process"/>
    <property type="evidence" value="ECO:0000318"/>
    <property type="project" value="GO_Central"/>
</dbReference>
<dbReference type="FunFam" id="3.30.390.30:FF:000001">
    <property type="entry name" value="Dihydrolipoyl dehydrogenase"/>
    <property type="match status" value="1"/>
</dbReference>
<dbReference type="FunFam" id="3.50.50.60:FF:000025">
    <property type="entry name" value="Dihydrolipoyl dehydrogenase"/>
    <property type="match status" value="1"/>
</dbReference>
<dbReference type="Gene3D" id="3.30.390.30">
    <property type="match status" value="1"/>
</dbReference>
<dbReference type="Gene3D" id="3.50.50.60">
    <property type="entry name" value="FAD/NAD(P)-binding domain"/>
    <property type="match status" value="2"/>
</dbReference>
<dbReference type="InterPro" id="IPR050151">
    <property type="entry name" value="Class-I_Pyr_Nuc-Dis_Oxidored"/>
</dbReference>
<dbReference type="InterPro" id="IPR036188">
    <property type="entry name" value="FAD/NAD-bd_sf"/>
</dbReference>
<dbReference type="InterPro" id="IPR023753">
    <property type="entry name" value="FAD/NAD-binding_dom"/>
</dbReference>
<dbReference type="InterPro" id="IPR016156">
    <property type="entry name" value="FAD/NAD-linked_Rdtase_dimer_sf"/>
</dbReference>
<dbReference type="InterPro" id="IPR006258">
    <property type="entry name" value="Lipoamide_DH"/>
</dbReference>
<dbReference type="InterPro" id="IPR001100">
    <property type="entry name" value="Pyr_nuc-diS_OxRdtase"/>
</dbReference>
<dbReference type="InterPro" id="IPR004099">
    <property type="entry name" value="Pyr_nucl-diS_OxRdtase_dimer"/>
</dbReference>
<dbReference type="InterPro" id="IPR012999">
    <property type="entry name" value="Pyr_OxRdtase_I_AS"/>
</dbReference>
<dbReference type="NCBIfam" id="TIGR01350">
    <property type="entry name" value="lipoamide_DH"/>
    <property type="match status" value="1"/>
</dbReference>
<dbReference type="PANTHER" id="PTHR22912:SF151">
    <property type="entry name" value="DIHYDROLIPOYL DEHYDROGENASE, MITOCHONDRIAL"/>
    <property type="match status" value="1"/>
</dbReference>
<dbReference type="PANTHER" id="PTHR22912">
    <property type="entry name" value="DISULFIDE OXIDOREDUCTASE"/>
    <property type="match status" value="1"/>
</dbReference>
<dbReference type="Pfam" id="PF07992">
    <property type="entry name" value="Pyr_redox_2"/>
    <property type="match status" value="1"/>
</dbReference>
<dbReference type="Pfam" id="PF02852">
    <property type="entry name" value="Pyr_redox_dim"/>
    <property type="match status" value="1"/>
</dbReference>
<dbReference type="PIRSF" id="PIRSF000350">
    <property type="entry name" value="Mercury_reductase_MerA"/>
    <property type="match status" value="1"/>
</dbReference>
<dbReference type="PRINTS" id="PR00368">
    <property type="entry name" value="FADPNR"/>
</dbReference>
<dbReference type="PRINTS" id="PR00411">
    <property type="entry name" value="PNDRDTASEI"/>
</dbReference>
<dbReference type="SUPFAM" id="SSF51905">
    <property type="entry name" value="FAD/NAD(P)-binding domain"/>
    <property type="match status" value="1"/>
</dbReference>
<dbReference type="SUPFAM" id="SSF55424">
    <property type="entry name" value="FAD/NAD-linked reductases, dimerisation (C-terminal) domain"/>
    <property type="match status" value="1"/>
</dbReference>
<dbReference type="PROSITE" id="PS00076">
    <property type="entry name" value="PYRIDINE_REDOX_1"/>
    <property type="match status" value="1"/>
</dbReference>
<proteinExistence type="inferred from homology"/>
<reference key="1">
    <citation type="journal article" date="1998" name="Science">
        <title>Genome sequence of the nematode C. elegans: a platform for investigating biology.</title>
        <authorList>
            <consortium name="The C. elegans sequencing consortium"/>
        </authorList>
    </citation>
    <scope>NUCLEOTIDE SEQUENCE [LARGE SCALE GENOMIC DNA]</scope>
    <scope>ALTERNATIVE SPLICING</scope>
    <source>
        <strain>Bristol N2</strain>
    </source>
</reference>